<organism>
    <name type="scientific">Mesobuthus eupeus</name>
    <name type="common">Lesser Asian scorpion</name>
    <name type="synonym">Buthus eupeus</name>
    <dbReference type="NCBI Taxonomy" id="34648"/>
    <lineage>
        <taxon>Eukaryota</taxon>
        <taxon>Metazoa</taxon>
        <taxon>Ecdysozoa</taxon>
        <taxon>Arthropoda</taxon>
        <taxon>Chelicerata</taxon>
        <taxon>Arachnida</taxon>
        <taxon>Scorpiones</taxon>
        <taxon>Buthida</taxon>
        <taxon>Buthoidea</taxon>
        <taxon>Buthidae</taxon>
        <taxon>Mesobuthus</taxon>
    </lineage>
</organism>
<proteinExistence type="evidence at protein level"/>
<name>CTXL2_MESEU</name>
<dbReference type="EMBL" id="HQ853233">
    <property type="protein sequence ID" value="ADY02962.1"/>
    <property type="molecule type" value="mRNA"/>
</dbReference>
<dbReference type="SMR" id="F1DI80"/>
<dbReference type="GO" id="GO:0005576">
    <property type="term" value="C:extracellular region"/>
    <property type="evidence" value="ECO:0007669"/>
    <property type="project" value="UniProtKB-SubCell"/>
</dbReference>
<dbReference type="GO" id="GO:0017081">
    <property type="term" value="F:chloride channel regulator activity"/>
    <property type="evidence" value="ECO:0007669"/>
    <property type="project" value="UniProtKB-KW"/>
</dbReference>
<dbReference type="GO" id="GO:0030414">
    <property type="term" value="F:peptidase inhibitor activity"/>
    <property type="evidence" value="ECO:0007669"/>
    <property type="project" value="UniProtKB-KW"/>
</dbReference>
<dbReference type="GO" id="GO:0090729">
    <property type="term" value="F:toxin activity"/>
    <property type="evidence" value="ECO:0007669"/>
    <property type="project" value="UniProtKB-KW"/>
</dbReference>
<dbReference type="InterPro" id="IPR036574">
    <property type="entry name" value="Scorpion_toxin-like_sf"/>
</dbReference>
<dbReference type="InterPro" id="IPR007958">
    <property type="entry name" value="Scorpion_toxinS_Cl_inh"/>
</dbReference>
<dbReference type="Pfam" id="PF05294">
    <property type="entry name" value="Toxin_5"/>
    <property type="match status" value="1"/>
</dbReference>
<dbReference type="SUPFAM" id="SSF57095">
    <property type="entry name" value="Scorpion toxin-like"/>
    <property type="match status" value="1"/>
</dbReference>
<dbReference type="PROSITE" id="PS51200">
    <property type="entry name" value="SHORT_SCORPION_CHLORIDE"/>
    <property type="match status" value="1"/>
</dbReference>
<accession>F1DI80</accession>
<sequence>MCMPCFTTDHNMAKKCNDCCGGYGKCFGPQCLCR</sequence>
<comment type="function">
    <text evidence="2 4 5">Toxin with unknown function in healthy organisms. Suppress growth and migration of glioma cells and decreases the mRNA expression of annexin A2 (ANXA2) and forkhead box protein M1 (FOXM1), two key molecules in the progression and invasion of glioma (PubMed:35524923). May affect chloride channel (By similarity). May interact with MMP2 and inhibit its catalytic activity (By similarity) (Ref.2). In vivo, is not toxic when administrated to mice at high doses (PubMed:35524923).</text>
</comment>
<comment type="subcellular location">
    <subcellularLocation>
        <location evidence="8">Secreted</location>
    </subcellularLocation>
</comment>
<comment type="tissue specificity">
    <text evidence="8">Expressed by the venom gland.</text>
</comment>
<comment type="domain">
    <text evidence="1">The presence of a 'disulfide through disulfide knot' structurally defines this protein as a knottin.</text>
</comment>
<comment type="similarity">
    <text evidence="7">Belongs to the short scorpion toxin superfamily. Chloride channel inhibitor family.</text>
</comment>
<protein>
    <recommendedName>
        <fullName evidence="6">Chlorotoxin-like peptide MeICT</fullName>
    </recommendedName>
</protein>
<evidence type="ECO:0000250" key="1">
    <source>
        <dbReference type="UniProtKB" id="P15222"/>
    </source>
</evidence>
<evidence type="ECO:0000250" key="2">
    <source>
        <dbReference type="UniProtKB" id="Q9UAD0"/>
    </source>
</evidence>
<evidence type="ECO:0000255" key="3">
    <source>
        <dbReference type="PROSITE-ProRule" id="PRU00545"/>
    </source>
</evidence>
<evidence type="ECO:0000269" key="4">
    <source>
    </source>
</evidence>
<evidence type="ECO:0000269" key="5">
    <source ref="2"/>
</evidence>
<evidence type="ECO:0000303" key="6">
    <source>
    </source>
</evidence>
<evidence type="ECO:0000305" key="7"/>
<evidence type="ECO:0000305" key="8">
    <source>
    </source>
</evidence>
<evidence type="ECO:0000312" key="9">
    <source>
        <dbReference type="EMBL" id="ADY02962.1"/>
    </source>
</evidence>
<keyword id="KW-1265">Chloride channel impairing toxin</keyword>
<keyword id="KW-1015">Disulfide bond</keyword>
<keyword id="KW-0872">Ion channel impairing toxin</keyword>
<keyword id="KW-0960">Knottin</keyword>
<keyword id="KW-0481">Metalloenzyme inhibitor</keyword>
<keyword id="KW-0483">Metalloprotease inhibitor</keyword>
<keyword id="KW-0646">Protease inhibitor</keyword>
<keyword id="KW-0964">Secreted</keyword>
<keyword id="KW-0800">Toxin</keyword>
<keyword id="KW-0870">Voltage-gated chloride channel impairing toxin</keyword>
<feature type="chain" id="PRO_0000456335" description="Chlorotoxin-like peptide MeICT">
    <location>
        <begin position="1"/>
        <end position="34"/>
    </location>
</feature>
<feature type="disulfide bond" evidence="1 3">
    <location>
        <begin position="2"/>
        <end position="19"/>
    </location>
</feature>
<feature type="disulfide bond" evidence="1 3">
    <location>
        <begin position="5"/>
        <end position="26"/>
    </location>
</feature>
<feature type="disulfide bond" evidence="1 3">
    <location>
        <begin position="16"/>
        <end position="31"/>
    </location>
</feature>
<feature type="disulfide bond" evidence="1 3">
    <location>
        <begin position="20"/>
        <end position="33"/>
    </location>
</feature>
<reference evidence="9" key="1">
    <citation type="submission" date="2011-01" db="EMBL/GenBank/DDBJ databases">
        <title>Isolation and molecular cloning of chlorotoxin-like peptide gene 'Me CT' from Mesobuthus eupeus in Iran.</title>
        <authorList>
            <person name="Ayat H."/>
            <person name="Ilkhanizadeh S."/>
            <person name="Ahadi A.M."/>
        </authorList>
    </citation>
    <scope>NUCLEOTIDE SEQUENCE [MRNA]</scope>
    <source>
        <tissue>Venom gland</tissue>
    </source>
</reference>
<reference key="2">
    <citation type="journal article" date="2015" name="Iran. J. Toxicol.">
        <title>Molecular modeling and docking studies on the first chlorotoxin-like peptide from iranian scorpion Mesobuthus eupeus (MeICT) and Snp variants of matrix methaloproteinase-2 (MMP-2).</title>
        <authorList>
            <person name="Mohammadi Farsani F."/>
            <person name="Ayat H."/>
            <person name="Mohammad Ahadi A."/>
        </authorList>
    </citation>
    <scope>3D-STRUCTURE MODELING</scope>
    <scope>PROBABLE INTERACTION WITH MMP2</scope>
</reference>
<reference key="3">
    <citation type="journal article" date="2022" name="Biotechnol. Lett.">
        <title>Recombinantly expressed MeICT, a new toxin from Mesobuthus eupeus scorpion, inhibits glioma cell proliferation and downregulates Annexin A2 and FOXM1 genes.</title>
        <authorList>
            <person name="Gandomkari M.S."/>
            <person name="Ayat H."/>
            <person name="Ahadi A.M."/>
        </authorList>
    </citation>
    <scope>FUNCTION</scope>
    <scope>BIOASSAY</scope>
    <scope>3D-STRUCTURE MODELING</scope>
    <scope>RECOMBINANT EXPRESSION</scope>
    <source>
        <tissue>Venom gland</tissue>
    </source>
</reference>